<evidence type="ECO:0000255" key="1">
    <source>
        <dbReference type="HAMAP-Rule" id="MF_00251"/>
    </source>
</evidence>
<evidence type="ECO:0000305" key="2"/>
<reference key="1">
    <citation type="journal article" date="2002" name="Proc. Natl. Acad. Sci. U.S.A.">
        <title>Genome sequence of Streptococcus mutans UA159, a cariogenic dental pathogen.</title>
        <authorList>
            <person name="Ajdic D.J."/>
            <person name="McShan W.M."/>
            <person name="McLaughlin R.E."/>
            <person name="Savic G."/>
            <person name="Chang J."/>
            <person name="Carson M.B."/>
            <person name="Primeaux C."/>
            <person name="Tian R."/>
            <person name="Kenton S."/>
            <person name="Jia H.G."/>
            <person name="Lin S.P."/>
            <person name="Qian Y."/>
            <person name="Li S."/>
            <person name="Zhu H."/>
            <person name="Najar F.Z."/>
            <person name="Lai H."/>
            <person name="White J."/>
            <person name="Roe B.A."/>
            <person name="Ferretti J.J."/>
        </authorList>
    </citation>
    <scope>NUCLEOTIDE SEQUENCE [LARGE SCALE GENOMIC DNA]</scope>
    <source>
        <strain>ATCC 700610 / UA159</strain>
    </source>
</reference>
<name>RL36_STRMU</name>
<sequence>MKVRPSVKPICEYCKVIRRNGRVMVICPTNPKHKQRQG</sequence>
<comment type="similarity">
    <text evidence="1">Belongs to the bacterial ribosomal protein bL36 family.</text>
</comment>
<feature type="chain" id="PRO_0000126276" description="Large ribosomal subunit protein bL36">
    <location>
        <begin position="1"/>
        <end position="38"/>
    </location>
</feature>
<accession>P66308</accession>
<accession>Q9A1V2</accession>
<organism>
    <name type="scientific">Streptococcus mutans serotype c (strain ATCC 700610 / UA159)</name>
    <dbReference type="NCBI Taxonomy" id="210007"/>
    <lineage>
        <taxon>Bacteria</taxon>
        <taxon>Bacillati</taxon>
        <taxon>Bacillota</taxon>
        <taxon>Bacilli</taxon>
        <taxon>Lactobacillales</taxon>
        <taxon>Streptococcaceae</taxon>
        <taxon>Streptococcus</taxon>
    </lineage>
</organism>
<gene>
    <name evidence="1" type="primary">rpmJ</name>
    <name type="ordered locus">SMU_2003.1</name>
    <name type="ORF">SMU_2003a</name>
</gene>
<keyword id="KW-1185">Reference proteome</keyword>
<keyword id="KW-0687">Ribonucleoprotein</keyword>
<keyword id="KW-0689">Ribosomal protein</keyword>
<proteinExistence type="inferred from homology"/>
<protein>
    <recommendedName>
        <fullName evidence="1">Large ribosomal subunit protein bL36</fullName>
    </recommendedName>
    <alternativeName>
        <fullName evidence="2">50S ribosomal protein L36</fullName>
    </alternativeName>
</protein>
<dbReference type="EMBL" id="AE014133">
    <property type="protein sequence ID" value="AAN59607.1"/>
    <property type="molecule type" value="Genomic_DNA"/>
</dbReference>
<dbReference type="RefSeq" id="NP_722301.1">
    <property type="nucleotide sequence ID" value="NC_004350.2"/>
</dbReference>
<dbReference type="RefSeq" id="WP_000868345.1">
    <property type="nucleotide sequence ID" value="NC_004350.2"/>
</dbReference>
<dbReference type="SMR" id="P66308"/>
<dbReference type="STRING" id="210007.SMU_2003a"/>
<dbReference type="GeneID" id="93860206"/>
<dbReference type="KEGG" id="smu:SMU_2003a"/>
<dbReference type="PATRIC" id="fig|210007.7.peg.1784"/>
<dbReference type="eggNOG" id="COG0257">
    <property type="taxonomic scope" value="Bacteria"/>
</dbReference>
<dbReference type="HOGENOM" id="CLU_135723_6_2_9"/>
<dbReference type="OrthoDB" id="9802520at2"/>
<dbReference type="PhylomeDB" id="P66308"/>
<dbReference type="Proteomes" id="UP000002512">
    <property type="component" value="Chromosome"/>
</dbReference>
<dbReference type="GO" id="GO:0005737">
    <property type="term" value="C:cytoplasm"/>
    <property type="evidence" value="ECO:0007669"/>
    <property type="project" value="UniProtKB-ARBA"/>
</dbReference>
<dbReference type="GO" id="GO:1990904">
    <property type="term" value="C:ribonucleoprotein complex"/>
    <property type="evidence" value="ECO:0007669"/>
    <property type="project" value="UniProtKB-KW"/>
</dbReference>
<dbReference type="GO" id="GO:0005840">
    <property type="term" value="C:ribosome"/>
    <property type="evidence" value="ECO:0007669"/>
    <property type="project" value="UniProtKB-KW"/>
</dbReference>
<dbReference type="GO" id="GO:0003735">
    <property type="term" value="F:structural constituent of ribosome"/>
    <property type="evidence" value="ECO:0007669"/>
    <property type="project" value="InterPro"/>
</dbReference>
<dbReference type="GO" id="GO:0006412">
    <property type="term" value="P:translation"/>
    <property type="evidence" value="ECO:0007669"/>
    <property type="project" value="UniProtKB-UniRule"/>
</dbReference>
<dbReference type="HAMAP" id="MF_00251">
    <property type="entry name" value="Ribosomal_bL36"/>
    <property type="match status" value="1"/>
</dbReference>
<dbReference type="InterPro" id="IPR000473">
    <property type="entry name" value="Ribosomal_bL36"/>
</dbReference>
<dbReference type="InterPro" id="IPR035977">
    <property type="entry name" value="Ribosomal_bL36_sp"/>
</dbReference>
<dbReference type="NCBIfam" id="TIGR01022">
    <property type="entry name" value="rpmJ_bact"/>
    <property type="match status" value="1"/>
</dbReference>
<dbReference type="PANTHER" id="PTHR42888">
    <property type="entry name" value="50S RIBOSOMAL PROTEIN L36, CHLOROPLASTIC"/>
    <property type="match status" value="1"/>
</dbReference>
<dbReference type="PANTHER" id="PTHR42888:SF1">
    <property type="entry name" value="LARGE RIBOSOMAL SUBUNIT PROTEIN BL36C"/>
    <property type="match status" value="1"/>
</dbReference>
<dbReference type="Pfam" id="PF00444">
    <property type="entry name" value="Ribosomal_L36"/>
    <property type="match status" value="1"/>
</dbReference>
<dbReference type="SUPFAM" id="SSF57840">
    <property type="entry name" value="Ribosomal protein L36"/>
    <property type="match status" value="1"/>
</dbReference>
<dbReference type="PROSITE" id="PS00828">
    <property type="entry name" value="RIBOSOMAL_L36"/>
    <property type="match status" value="1"/>
</dbReference>